<reference key="1">
    <citation type="journal article" date="2000" name="DNA Res.">
        <title>Structural analysis of Arabidopsis thaliana chromosome 3. I. Sequence features of the regions of 4,504,864 bp covered by sixty P1 and TAC clones.</title>
        <authorList>
            <person name="Sato S."/>
            <person name="Nakamura Y."/>
            <person name="Kaneko T."/>
            <person name="Katoh T."/>
            <person name="Asamizu E."/>
            <person name="Tabata S."/>
        </authorList>
    </citation>
    <scope>NUCLEOTIDE SEQUENCE [LARGE SCALE GENOMIC DNA]</scope>
    <source>
        <strain>cv. Columbia</strain>
    </source>
</reference>
<reference key="2">
    <citation type="journal article" date="2017" name="Plant J.">
        <title>Araport11: a complete reannotation of the Arabidopsis thaliana reference genome.</title>
        <authorList>
            <person name="Cheng C.Y."/>
            <person name="Krishnakumar V."/>
            <person name="Chan A.P."/>
            <person name="Thibaud-Nissen F."/>
            <person name="Schobel S."/>
            <person name="Town C.D."/>
        </authorList>
    </citation>
    <scope>GENOME REANNOTATION</scope>
    <source>
        <strain>cv. Columbia</strain>
    </source>
</reference>
<reference key="3">
    <citation type="journal article" date="2003" name="Science">
        <title>Empirical analysis of transcriptional activity in the Arabidopsis genome.</title>
        <authorList>
            <person name="Yamada K."/>
            <person name="Lim J."/>
            <person name="Dale J.M."/>
            <person name="Chen H."/>
            <person name="Shinn P."/>
            <person name="Palm C.J."/>
            <person name="Southwick A.M."/>
            <person name="Wu H.C."/>
            <person name="Kim C.J."/>
            <person name="Nguyen M."/>
            <person name="Pham P.K."/>
            <person name="Cheuk R.F."/>
            <person name="Karlin-Newmann G."/>
            <person name="Liu S.X."/>
            <person name="Lam B."/>
            <person name="Sakano H."/>
            <person name="Wu T."/>
            <person name="Yu G."/>
            <person name="Miranda M."/>
            <person name="Quach H.L."/>
            <person name="Tripp M."/>
            <person name="Chang C.H."/>
            <person name="Lee J.M."/>
            <person name="Toriumi M.J."/>
            <person name="Chan M.M."/>
            <person name="Tang C.C."/>
            <person name="Onodera C.S."/>
            <person name="Deng J.M."/>
            <person name="Akiyama K."/>
            <person name="Ansari Y."/>
            <person name="Arakawa T."/>
            <person name="Banh J."/>
            <person name="Banno F."/>
            <person name="Bowser L."/>
            <person name="Brooks S.Y."/>
            <person name="Carninci P."/>
            <person name="Chao Q."/>
            <person name="Choy N."/>
            <person name="Enju A."/>
            <person name="Goldsmith A.D."/>
            <person name="Gurjal M."/>
            <person name="Hansen N.F."/>
            <person name="Hayashizaki Y."/>
            <person name="Johnson-Hopson C."/>
            <person name="Hsuan V.W."/>
            <person name="Iida K."/>
            <person name="Karnes M."/>
            <person name="Khan S."/>
            <person name="Koesema E."/>
            <person name="Ishida J."/>
            <person name="Jiang P.X."/>
            <person name="Jones T."/>
            <person name="Kawai J."/>
            <person name="Kamiya A."/>
            <person name="Meyers C."/>
            <person name="Nakajima M."/>
            <person name="Narusaka M."/>
            <person name="Seki M."/>
            <person name="Sakurai T."/>
            <person name="Satou M."/>
            <person name="Tamse R."/>
            <person name="Vaysberg M."/>
            <person name="Wallender E.K."/>
            <person name="Wong C."/>
            <person name="Yamamura Y."/>
            <person name="Yuan S."/>
            <person name="Shinozaki K."/>
            <person name="Davis R.W."/>
            <person name="Theologis A."/>
            <person name="Ecker J.R."/>
        </authorList>
    </citation>
    <scope>NUCLEOTIDE SEQUENCE [LARGE SCALE MRNA]</scope>
    <source>
        <strain>cv. Columbia</strain>
    </source>
</reference>
<reference key="4">
    <citation type="submission" date="2006-07" db="EMBL/GenBank/DDBJ databases">
        <title>Large-scale analysis of RIKEN Arabidopsis full-length (RAFL) cDNAs.</title>
        <authorList>
            <person name="Totoki Y."/>
            <person name="Seki M."/>
            <person name="Ishida J."/>
            <person name="Nakajima M."/>
            <person name="Enju A."/>
            <person name="Kamiya A."/>
            <person name="Narusaka M."/>
            <person name="Shin-i T."/>
            <person name="Nakagawa M."/>
            <person name="Sakamoto N."/>
            <person name="Oishi K."/>
            <person name="Kohara Y."/>
            <person name="Kobayashi M."/>
            <person name="Toyoda A."/>
            <person name="Sakaki Y."/>
            <person name="Sakurai T."/>
            <person name="Iida K."/>
            <person name="Akiyama K."/>
            <person name="Satou M."/>
            <person name="Toyoda T."/>
            <person name="Konagaya A."/>
            <person name="Carninci P."/>
            <person name="Kawai J."/>
            <person name="Hayashizaki Y."/>
            <person name="Shinozaki K."/>
        </authorList>
    </citation>
    <scope>NUCLEOTIDE SEQUENCE [LARGE SCALE MRNA] OF 677-908</scope>
    <source>
        <strain>cv. Columbia</strain>
    </source>
</reference>
<reference key="5">
    <citation type="journal article" date="2008" name="BMC Genomics">
        <title>Genome-wide analysis of CCCH zinc finger family in Arabidopsis and rice.</title>
        <authorList>
            <person name="Wang D."/>
            <person name="Guo Y."/>
            <person name="Wu C."/>
            <person name="Yang G."/>
            <person name="Li Y."/>
            <person name="Zheng C."/>
        </authorList>
    </citation>
    <scope>NOMENCLATURE</scope>
</reference>
<reference key="6">
    <citation type="journal article" date="2009" name="Plant Physiol.">
        <title>Large-scale Arabidopsis phosphoproteome profiling reveals novel chloroplast kinase substrates and phosphorylation networks.</title>
        <authorList>
            <person name="Reiland S."/>
            <person name="Messerli G."/>
            <person name="Baerenfaller K."/>
            <person name="Gerrits B."/>
            <person name="Endler A."/>
            <person name="Grossmann J."/>
            <person name="Gruissem W."/>
            <person name="Baginsky S."/>
        </authorList>
    </citation>
    <scope>PHOSPHORYLATION [LARGE SCALE ANALYSIS] AT SER-657</scope>
    <scope>IDENTIFICATION BY MASS SPECTROMETRY [LARGE SCALE ANALYSIS]</scope>
</reference>
<dbReference type="EMBL" id="AB018114">
    <property type="protein sequence ID" value="BAB02694.1"/>
    <property type="molecule type" value="Genomic_DNA"/>
</dbReference>
<dbReference type="EMBL" id="CP002686">
    <property type="protein sequence ID" value="AEE77353.1"/>
    <property type="molecule type" value="Genomic_DNA"/>
</dbReference>
<dbReference type="EMBL" id="CP002686">
    <property type="protein sequence ID" value="AEE77354.1"/>
    <property type="molecule type" value="Genomic_DNA"/>
</dbReference>
<dbReference type="EMBL" id="AY062574">
    <property type="protein sequence ID" value="AAL32652.1"/>
    <property type="molecule type" value="mRNA"/>
</dbReference>
<dbReference type="EMBL" id="BT000780">
    <property type="protein sequence ID" value="AAN31919.1"/>
    <property type="molecule type" value="mRNA"/>
</dbReference>
<dbReference type="EMBL" id="AK229929">
    <property type="protein sequence ID" value="BAF01755.1"/>
    <property type="molecule type" value="mRNA"/>
</dbReference>
<dbReference type="RefSeq" id="NP_189407.2">
    <property type="nucleotide sequence ID" value="NM_113686.3"/>
</dbReference>
<dbReference type="RefSeq" id="NP_851008.1">
    <property type="nucleotide sequence ID" value="NM_180677.2"/>
</dbReference>
<dbReference type="SMR" id="Q9LVX1"/>
<dbReference type="FunCoup" id="Q9LVX1">
    <property type="interactions" value="1772"/>
</dbReference>
<dbReference type="STRING" id="3702.Q9LVX1"/>
<dbReference type="iPTMnet" id="Q9LVX1"/>
<dbReference type="MetOSite" id="Q9LVX1"/>
<dbReference type="PaxDb" id="3702-AT3G27700.1"/>
<dbReference type="ProteomicsDB" id="239165"/>
<dbReference type="EnsemblPlants" id="AT3G27700.1">
    <property type="protein sequence ID" value="AT3G27700.1"/>
    <property type="gene ID" value="AT3G27700"/>
</dbReference>
<dbReference type="EnsemblPlants" id="AT3G27700.2">
    <property type="protein sequence ID" value="AT3G27700.2"/>
    <property type="gene ID" value="AT3G27700"/>
</dbReference>
<dbReference type="GeneID" id="822392"/>
<dbReference type="Gramene" id="AT3G27700.1">
    <property type="protein sequence ID" value="AT3G27700.1"/>
    <property type="gene ID" value="AT3G27700"/>
</dbReference>
<dbReference type="Gramene" id="AT3G27700.2">
    <property type="protein sequence ID" value="AT3G27700.2"/>
    <property type="gene ID" value="AT3G27700"/>
</dbReference>
<dbReference type="KEGG" id="ath:AT3G27700"/>
<dbReference type="Araport" id="AT3G27700"/>
<dbReference type="TAIR" id="AT3G27700"/>
<dbReference type="eggNOG" id="KOG2135">
    <property type="taxonomic scope" value="Eukaryota"/>
</dbReference>
<dbReference type="HOGENOM" id="CLU_011820_0_0_1"/>
<dbReference type="InParanoid" id="Q9LVX1"/>
<dbReference type="OMA" id="ANAKCWQ"/>
<dbReference type="OrthoDB" id="443401at2759"/>
<dbReference type="PhylomeDB" id="Q9LVX1"/>
<dbReference type="PRO" id="PR:Q9LVX1"/>
<dbReference type="Proteomes" id="UP000006548">
    <property type="component" value="Chromosome 3"/>
</dbReference>
<dbReference type="ExpressionAtlas" id="Q9LVX1">
    <property type="expression patterns" value="baseline and differential"/>
</dbReference>
<dbReference type="GO" id="GO:0003677">
    <property type="term" value="F:DNA binding"/>
    <property type="evidence" value="ECO:0007669"/>
    <property type="project" value="UniProtKB-KW"/>
</dbReference>
<dbReference type="GO" id="GO:0003729">
    <property type="term" value="F:mRNA binding"/>
    <property type="evidence" value="ECO:0000314"/>
    <property type="project" value="TAIR"/>
</dbReference>
<dbReference type="GO" id="GO:0008270">
    <property type="term" value="F:zinc ion binding"/>
    <property type="evidence" value="ECO:0007669"/>
    <property type="project" value="UniProtKB-KW"/>
</dbReference>
<dbReference type="CDD" id="cd12257">
    <property type="entry name" value="RRM1_RBM26_like"/>
    <property type="match status" value="1"/>
</dbReference>
<dbReference type="FunFam" id="3.30.70.330:FF:001347">
    <property type="entry name" value="Zinc finger CCCH domain-containing protein 41"/>
    <property type="match status" value="1"/>
</dbReference>
<dbReference type="FunFam" id="3.30.70.330:FF:001564">
    <property type="entry name" value="Zinc finger CCCH domain-containing protein 41"/>
    <property type="match status" value="1"/>
</dbReference>
<dbReference type="Gene3D" id="3.30.70.330">
    <property type="match status" value="2"/>
</dbReference>
<dbReference type="InterPro" id="IPR012677">
    <property type="entry name" value="Nucleotide-bd_a/b_plait_sf"/>
</dbReference>
<dbReference type="InterPro" id="IPR035979">
    <property type="entry name" value="RBD_domain_sf"/>
</dbReference>
<dbReference type="InterPro" id="IPR045137">
    <property type="entry name" value="RBM26/27"/>
</dbReference>
<dbReference type="InterPro" id="IPR000504">
    <property type="entry name" value="RRM_dom"/>
</dbReference>
<dbReference type="InterPro" id="IPR000571">
    <property type="entry name" value="Znf_CCCH"/>
</dbReference>
<dbReference type="PANTHER" id="PTHR14398">
    <property type="entry name" value="RNA RECOGNITION RRM/RNP DOMAIN"/>
    <property type="match status" value="1"/>
</dbReference>
<dbReference type="PANTHER" id="PTHR14398:SF0">
    <property type="entry name" value="ZINC FINGER PROTEIN SWM"/>
    <property type="match status" value="1"/>
</dbReference>
<dbReference type="Pfam" id="PF00076">
    <property type="entry name" value="RRM_1"/>
    <property type="match status" value="1"/>
</dbReference>
<dbReference type="SMART" id="SM00360">
    <property type="entry name" value="RRM"/>
    <property type="match status" value="1"/>
</dbReference>
<dbReference type="SMART" id="SM00356">
    <property type="entry name" value="ZnF_C3H1"/>
    <property type="match status" value="1"/>
</dbReference>
<dbReference type="SUPFAM" id="SSF54928">
    <property type="entry name" value="RNA-binding domain, RBD"/>
    <property type="match status" value="1"/>
</dbReference>
<dbReference type="PROSITE" id="PS50102">
    <property type="entry name" value="RRM"/>
    <property type="match status" value="1"/>
</dbReference>
<dbReference type="PROSITE" id="PS50103">
    <property type="entry name" value="ZF_C3H1"/>
    <property type="match status" value="1"/>
</dbReference>
<evidence type="ECO:0000255" key="1"/>
<evidence type="ECO:0000255" key="2">
    <source>
        <dbReference type="PROSITE-ProRule" id="PRU00176"/>
    </source>
</evidence>
<evidence type="ECO:0000255" key="3">
    <source>
        <dbReference type="PROSITE-ProRule" id="PRU00723"/>
    </source>
</evidence>
<evidence type="ECO:0000256" key="4">
    <source>
        <dbReference type="SAM" id="MobiDB-lite"/>
    </source>
</evidence>
<evidence type="ECO:0000305" key="5"/>
<evidence type="ECO:0007744" key="6">
    <source>
    </source>
</evidence>
<name>C3H41_ARATH</name>
<sequence>MELSVSSPKQSVLSPPDCMSDPEEEHEISEEEDDDRNHKHRRKEETRSQSLEQDSSDQAFSRPYRKNYRHYENGNSFSEHEKRSFGTGSGQRVQFDNQRMRSNPMFSRDSGPGRGRGNYGSWAQRDSRFNPVDLSSHMVQVGSMGQGMFGGRGLAGVSAAQSAPWPPFGMIPGVPNGGLDGFHHLQGSLRPPLNAPLNMGIPRQRCRDFEERGFCLRGDMCPMEHGMNRIVVDDVQSLSQFNLPVSVPGAPHLAASSKQVPAQFGGASFMNPKGAHGRTNEGGMAVDGLGYGDAYPSAGGTDFYDPDQPLWNNSTGETSGAISTLNSHGVDENVAPLDDSNQDAAENGCGIRDSRSTSQSVWGRMKGSNSQANSKEKADAVLNSSAVPEDQLKEVSVNSSRHGKQNHVGESVAKVVDSSNISNDMMNNTRKPTQKAMRTLFVNYVPHESNRRDLILAHFQKFGKVIDIHIPVNSERAFVQFSKREEAESALRAPDAVMGNRFIKLWWANRDSIPDNGLSTGSGASMKGRSMTASGAQNQFPIAAASKSNHVSSIAKVPTFQTGGAPSSSEQPKPVVVTTSGPKVTPLQQKKADTLERLKETLRKKQEMLEQKRNEYRKKLATLEKQGTVVKREEADEPDAKRVKLDTASDSGAAIASPKTESSTDKKVPILKPLSTAKLSTETPSPDSKNFKQRPYSFTTSLNAPMVNRYKLDNRTTTIKVVPPLPTGLADVAVVKEHFSSYGEVSKVELEDNASIDSGKDHETQNESRAACVTFVKRSAAEKAFANAKCWQEHTLQLVWVTRQSNRESNNNNNNSNSLSVSRDNLSSKNKCASVSNDPKPAVEVKTSSTEEPENTNVSGDNDSTLDKQETKESDNDNNKSNHESIEGASEVIATAGTDEEQSEQIHQ</sequence>
<proteinExistence type="evidence at protein level"/>
<keyword id="KW-0175">Coiled coil</keyword>
<keyword id="KW-0238">DNA-binding</keyword>
<keyword id="KW-0479">Metal-binding</keyword>
<keyword id="KW-0597">Phosphoprotein</keyword>
<keyword id="KW-1185">Reference proteome</keyword>
<keyword id="KW-0694">RNA-binding</keyword>
<keyword id="KW-0862">Zinc</keyword>
<keyword id="KW-0863">Zinc-finger</keyword>
<organism>
    <name type="scientific">Arabidopsis thaliana</name>
    <name type="common">Mouse-ear cress</name>
    <dbReference type="NCBI Taxonomy" id="3702"/>
    <lineage>
        <taxon>Eukaryota</taxon>
        <taxon>Viridiplantae</taxon>
        <taxon>Streptophyta</taxon>
        <taxon>Embryophyta</taxon>
        <taxon>Tracheophyta</taxon>
        <taxon>Spermatophyta</taxon>
        <taxon>Magnoliopsida</taxon>
        <taxon>eudicotyledons</taxon>
        <taxon>Gunneridae</taxon>
        <taxon>Pentapetalae</taxon>
        <taxon>rosids</taxon>
        <taxon>malvids</taxon>
        <taxon>Brassicales</taxon>
        <taxon>Brassicaceae</taxon>
        <taxon>Camelineae</taxon>
        <taxon>Arabidopsis</taxon>
    </lineage>
</organism>
<gene>
    <name type="ordered locus">At3g27700</name>
    <name type="ORF">MGF10.11</name>
</gene>
<protein>
    <recommendedName>
        <fullName>Zinc finger CCCH domain-containing protein 41</fullName>
        <shortName>AtC3H41</shortName>
    </recommendedName>
</protein>
<feature type="chain" id="PRO_0000371996" description="Zinc finger CCCH domain-containing protein 41">
    <location>
        <begin position="1"/>
        <end position="908"/>
    </location>
</feature>
<feature type="domain" description="RRM" evidence="2">
    <location>
        <begin position="438"/>
        <end position="510"/>
    </location>
</feature>
<feature type="zinc finger region" description="C3H1-type" evidence="3">
    <location>
        <begin position="200"/>
        <end position="228"/>
    </location>
</feature>
<feature type="region of interest" description="Disordered" evidence="4">
    <location>
        <begin position="1"/>
        <end position="124"/>
    </location>
</feature>
<feature type="region of interest" description="Disordered" evidence="4">
    <location>
        <begin position="333"/>
        <end position="375"/>
    </location>
</feature>
<feature type="region of interest" description="Disordered" evidence="4">
    <location>
        <begin position="558"/>
        <end position="590"/>
    </location>
</feature>
<feature type="region of interest" description="Disordered" evidence="4">
    <location>
        <begin position="629"/>
        <end position="695"/>
    </location>
</feature>
<feature type="region of interest" description="Disordered" evidence="4">
    <location>
        <begin position="807"/>
        <end position="908"/>
    </location>
</feature>
<feature type="coiled-coil region" evidence="1">
    <location>
        <begin position="587"/>
        <end position="630"/>
    </location>
</feature>
<feature type="compositionally biased region" description="Polar residues" evidence="4">
    <location>
        <begin position="1"/>
        <end position="13"/>
    </location>
</feature>
<feature type="compositionally biased region" description="Acidic residues" evidence="4">
    <location>
        <begin position="20"/>
        <end position="34"/>
    </location>
</feature>
<feature type="compositionally biased region" description="Polar residues" evidence="4">
    <location>
        <begin position="48"/>
        <end position="59"/>
    </location>
</feature>
<feature type="compositionally biased region" description="Polar residues" evidence="4">
    <location>
        <begin position="90"/>
        <end position="105"/>
    </location>
</feature>
<feature type="compositionally biased region" description="Polar residues" evidence="4">
    <location>
        <begin position="356"/>
        <end position="373"/>
    </location>
</feature>
<feature type="compositionally biased region" description="Polar residues" evidence="4">
    <location>
        <begin position="559"/>
        <end position="588"/>
    </location>
</feature>
<feature type="compositionally biased region" description="Basic and acidic residues" evidence="4">
    <location>
        <begin position="630"/>
        <end position="647"/>
    </location>
</feature>
<feature type="compositionally biased region" description="Polar residues" evidence="4">
    <location>
        <begin position="677"/>
        <end position="688"/>
    </location>
</feature>
<feature type="compositionally biased region" description="Low complexity" evidence="4">
    <location>
        <begin position="807"/>
        <end position="828"/>
    </location>
</feature>
<feature type="compositionally biased region" description="Polar residues" evidence="4">
    <location>
        <begin position="846"/>
        <end position="863"/>
    </location>
</feature>
<feature type="compositionally biased region" description="Basic and acidic residues" evidence="4">
    <location>
        <begin position="865"/>
        <end position="886"/>
    </location>
</feature>
<feature type="compositionally biased region" description="Acidic residues" evidence="4">
    <location>
        <begin position="898"/>
        <end position="908"/>
    </location>
</feature>
<feature type="modified residue" description="Phosphoserine" evidence="6">
    <location>
        <position position="657"/>
    </location>
</feature>
<feature type="sequence conflict" description="In Ref. 3; AAL32652." evidence="5" ref="3">
    <original>G</original>
    <variation>D</variation>
    <location>
        <position position="249"/>
    </location>
</feature>
<accession>Q9LVX1</accession>
<accession>Q0WMA1</accession>
<accession>Q8W4G4</accession>